<sequence>MKNYGPISSKVTKMLHGADYNPEQWIDMPNIWGEDVRLMKLSHTNVVAVGIFSWTMLEPEEGKFNFEWLDEIMDLMHKNGNYVILATPSGAKPIWMAHKYPETLRVAQNRVRNLYGERHNHCYTSPIYREKIAIIDRLLAERYKDHPALILWHISNEFEGQCYCPLCEEAFRDFLREKYDNDINKLNKAWWTKFWSHTYASFDEIEAPAPHGEPALHGLNLDWMRFVTHQTLDYYKHERSILKEITPDIPVTTNFHDYISLFRGIDYWKFAPYLDVVSWDNYPYWHGERTDDHEGSRIGFVHDLNRAILNGKPFMMMESSPSSTNWQPVAKLRRPGMHVLSSLQAVAHGSDTVQYFQWRKSRGSSEKFHGAVVDHCGHENTRVFRDVTKVGEILSKLDDVIGTSVEPQVAVIYDWENYWAINDAQGPRIEQKDYFETCQKHYKAFWDMSIPTDVINMDCDFSKYKVVVAPMLYMVRPGVGERLEEFVKNGGTLVTTYWSGIVDENDLCFLGGFPGPLKKVTGIWAEELDALYDEDVNYVSVEEGNSLGMKGEYEARIFCDLIHSEGAEVLATYKTDFYKGMPALTCNNFGEGQAYYIAFRNNDEFLSDFYSSLAKKLTLKRAIEIDLPKGINAQVRMDEKNEFVFFMNFSSEEKTIDIKDLDLTDMVTGEKVAKEMEIEPYGVRIVRRK</sequence>
<comment type="catalytic activity">
    <reaction evidence="2">
        <text>Hydrolysis of terminal non-reducing beta-D-galactose residues in beta-D-galactosides.</text>
        <dbReference type="EC" id="3.2.1.23"/>
    </reaction>
</comment>
<comment type="similarity">
    <text evidence="3">Belongs to the glycosyl hydrolase 42 family.</text>
</comment>
<comment type="sequence caution" evidence="4">
    <conflict type="erroneous initiation">
        <sequence resource="EMBL-CDS" id="BAA08485"/>
    </conflict>
    <text>Truncated N-terminus.</text>
</comment>
<evidence type="ECO:0000250" key="1">
    <source>
        <dbReference type="UniProtKB" id="O69315"/>
    </source>
</evidence>
<evidence type="ECO:0000250" key="2">
    <source>
        <dbReference type="UniProtKB" id="Q65CX4"/>
    </source>
</evidence>
<evidence type="ECO:0000255" key="3"/>
<evidence type="ECO:0000305" key="4"/>
<evidence type="ECO:0000312" key="5">
    <source>
        <dbReference type="EMBL" id="ABG83924.1"/>
    </source>
</evidence>
<evidence type="ECO:0000312" key="6">
    <source>
        <dbReference type="EMBL" id="BAA08485.1"/>
    </source>
</evidence>
<keyword id="KW-0326">Glycosidase</keyword>
<keyword id="KW-0378">Hydrolase</keyword>
<keyword id="KW-0479">Metal-binding</keyword>
<keyword id="KW-0862">Zinc</keyword>
<organism>
    <name type="scientific">Clostridium perfringens (strain ATCC 13124 / DSM 756 / JCM 1290 / NCIMB 6125 / NCTC 8237 / Type A)</name>
    <dbReference type="NCBI Taxonomy" id="195103"/>
    <lineage>
        <taxon>Bacteria</taxon>
        <taxon>Bacillati</taxon>
        <taxon>Bacillota</taxon>
        <taxon>Clostridia</taxon>
        <taxon>Eubacteriales</taxon>
        <taxon>Clostridiaceae</taxon>
        <taxon>Clostridium</taxon>
    </lineage>
</organism>
<reference evidence="4 6" key="1">
    <citation type="journal article" date="1995" name="Microbiol. Immunol.">
        <title>Sequence analysis of flanking regions of the pfoA gene of Clostridium perfringens: beta-galactosidase gene (pbg) is located in the 3'-flanking region.</title>
        <authorList>
            <person name="Shimizu T."/>
            <person name="Kobayashi T."/>
            <person name="Ba-Thein W."/>
            <person name="Ohtani K."/>
            <person name="Hayashi H."/>
        </authorList>
    </citation>
    <scope>NUCLEOTIDE SEQUENCE [GENOMIC DNA]</scope>
    <source>
        <strain evidence="5">ATCC 13124 / DSM 756 / JCM 1290 / NCIMB 6125 / NCTC 8237 / S 107 / Type A</strain>
    </source>
</reference>
<reference key="2">
    <citation type="journal article" date="2006" name="Genome Res.">
        <title>Skewed genomic variability in strains of the toxigenic bacterial pathogen, Clostridium perfringens.</title>
        <authorList>
            <person name="Myers G.S.A."/>
            <person name="Rasko D.A."/>
            <person name="Cheung J.K."/>
            <person name="Ravel J."/>
            <person name="Seshadri R."/>
            <person name="DeBoy R.T."/>
            <person name="Ren Q."/>
            <person name="Varga J."/>
            <person name="Awad M.M."/>
            <person name="Brinkac L.M."/>
            <person name="Daugherty S.C."/>
            <person name="Haft D.H."/>
            <person name="Dodson R.J."/>
            <person name="Madupu R."/>
            <person name="Nelson W.C."/>
            <person name="Rosovitz M.J."/>
            <person name="Sullivan S.A."/>
            <person name="Khouri H."/>
            <person name="Dimitrov G.I."/>
            <person name="Watkins K.L."/>
            <person name="Mulligan S."/>
            <person name="Benton J."/>
            <person name="Radune D."/>
            <person name="Fisher D.J."/>
            <person name="Atkins H.S."/>
            <person name="Hiscox T."/>
            <person name="Jost B.H."/>
            <person name="Billington S.J."/>
            <person name="Songer J.G."/>
            <person name="McClane B.A."/>
            <person name="Titball R.W."/>
            <person name="Rood J.I."/>
            <person name="Melville S.B."/>
            <person name="Paulsen I.T."/>
        </authorList>
    </citation>
    <scope>NUCLEOTIDE SEQUENCE [LARGE SCALE GENOMIC DNA]</scope>
    <source>
        <strain evidence="5">ATCC 13124 / DSM 756 / JCM 1290 / NCIMB 6125 / NCTC 8237 / S 107 / Type A</strain>
    </source>
</reference>
<dbReference type="EC" id="3.2.1.23"/>
<dbReference type="EMBL" id="D49537">
    <property type="protein sequence ID" value="BAA08485.1"/>
    <property type="status" value="ALT_INIT"/>
    <property type="molecule type" value="Genomic_DNA"/>
</dbReference>
<dbReference type="EMBL" id="CP000246">
    <property type="protein sequence ID" value="ABG83924.1"/>
    <property type="molecule type" value="Genomic_DNA"/>
</dbReference>
<dbReference type="SMR" id="Q0TUR6"/>
<dbReference type="STRING" id="195103.CPF_0160"/>
<dbReference type="CAZy" id="GH42">
    <property type="family name" value="Glycoside Hydrolase Family 42"/>
</dbReference>
<dbReference type="PaxDb" id="195103-CPF_0160"/>
<dbReference type="KEGG" id="cpf:CPF_0160"/>
<dbReference type="eggNOG" id="COG1874">
    <property type="taxonomic scope" value="Bacteria"/>
</dbReference>
<dbReference type="HOGENOM" id="CLU_012430_1_1_9"/>
<dbReference type="Proteomes" id="UP000001823">
    <property type="component" value="Chromosome"/>
</dbReference>
<dbReference type="GO" id="GO:0009341">
    <property type="term" value="C:beta-galactosidase complex"/>
    <property type="evidence" value="ECO:0007669"/>
    <property type="project" value="InterPro"/>
</dbReference>
<dbReference type="GO" id="GO:0004565">
    <property type="term" value="F:beta-galactosidase activity"/>
    <property type="evidence" value="ECO:0007669"/>
    <property type="project" value="UniProtKB-EC"/>
</dbReference>
<dbReference type="GO" id="GO:0046872">
    <property type="term" value="F:metal ion binding"/>
    <property type="evidence" value="ECO:0007669"/>
    <property type="project" value="UniProtKB-KW"/>
</dbReference>
<dbReference type="GO" id="GO:0006012">
    <property type="term" value="P:galactose metabolic process"/>
    <property type="evidence" value="ECO:0007669"/>
    <property type="project" value="InterPro"/>
</dbReference>
<dbReference type="CDD" id="cd03143">
    <property type="entry name" value="A4_beta-galactosidase_middle_domain"/>
    <property type="match status" value="1"/>
</dbReference>
<dbReference type="Gene3D" id="3.40.50.880">
    <property type="match status" value="1"/>
</dbReference>
<dbReference type="Gene3D" id="3.20.20.80">
    <property type="entry name" value="Glycosidases"/>
    <property type="match status" value="1"/>
</dbReference>
<dbReference type="Gene3D" id="2.60.40.1180">
    <property type="entry name" value="Golgi alpha-mannosidase II"/>
    <property type="match status" value="1"/>
</dbReference>
<dbReference type="InterPro" id="IPR013739">
    <property type="entry name" value="Beta_galactosidase_C"/>
</dbReference>
<dbReference type="InterPro" id="IPR013738">
    <property type="entry name" value="Beta_galactosidase_Trimer"/>
</dbReference>
<dbReference type="InterPro" id="IPR029062">
    <property type="entry name" value="Class_I_gatase-like"/>
</dbReference>
<dbReference type="InterPro" id="IPR003476">
    <property type="entry name" value="Glyco_hydro_42"/>
</dbReference>
<dbReference type="InterPro" id="IPR013529">
    <property type="entry name" value="Glyco_hydro_42_N"/>
</dbReference>
<dbReference type="InterPro" id="IPR013780">
    <property type="entry name" value="Glyco_hydro_b"/>
</dbReference>
<dbReference type="InterPro" id="IPR017853">
    <property type="entry name" value="Glycoside_hydrolase_SF"/>
</dbReference>
<dbReference type="PANTHER" id="PTHR36447">
    <property type="entry name" value="BETA-GALACTOSIDASE GANA"/>
    <property type="match status" value="1"/>
</dbReference>
<dbReference type="PANTHER" id="PTHR36447:SF1">
    <property type="entry name" value="BETA-GALACTOSIDASE GANA"/>
    <property type="match status" value="1"/>
</dbReference>
<dbReference type="Pfam" id="PF02449">
    <property type="entry name" value="Glyco_hydro_42"/>
    <property type="match status" value="1"/>
</dbReference>
<dbReference type="Pfam" id="PF08533">
    <property type="entry name" value="Glyco_hydro_42C"/>
    <property type="match status" value="1"/>
</dbReference>
<dbReference type="Pfam" id="PF08532">
    <property type="entry name" value="Glyco_hydro_42M"/>
    <property type="match status" value="1"/>
</dbReference>
<dbReference type="PIRSF" id="PIRSF001084">
    <property type="entry name" value="B-galactosidase"/>
    <property type="match status" value="1"/>
</dbReference>
<dbReference type="SUPFAM" id="SSF51445">
    <property type="entry name" value="(Trans)glycosidases"/>
    <property type="match status" value="1"/>
</dbReference>
<dbReference type="SUPFAM" id="SSF52317">
    <property type="entry name" value="Class I glutamine amidotransferase-like"/>
    <property type="match status" value="1"/>
</dbReference>
<gene>
    <name evidence="6" type="primary">pbg</name>
    <name type="ordered locus">CPF_0160</name>
</gene>
<proteinExistence type="inferred from homology"/>
<accession>Q0TUR6</accession>
<accession>Q46253</accession>
<accession>Q59312</accession>
<name>BGAL_CLOP1</name>
<protein>
    <recommendedName>
        <fullName>Beta-galactosidase Pbg</fullName>
        <shortName evidence="2">Beta-gal</shortName>
        <ecNumber>3.2.1.23</ecNumber>
    </recommendedName>
</protein>
<feature type="chain" id="PRO_0000407688" description="Beta-galactosidase Pbg">
    <location>
        <begin position="1"/>
        <end position="689"/>
    </location>
</feature>
<feature type="active site" description="Proton donor" evidence="1">
    <location>
        <position position="157"/>
    </location>
</feature>
<feature type="active site" description="Nucleophile" evidence="1">
    <location>
        <position position="318"/>
    </location>
</feature>
<feature type="binding site" evidence="1">
    <location>
        <position position="118"/>
    </location>
    <ligand>
        <name>substrate</name>
    </ligand>
</feature>
<feature type="binding site" evidence="1">
    <location>
        <position position="122"/>
    </location>
    <ligand>
        <name>Zn(2+)</name>
        <dbReference type="ChEBI" id="CHEBI:29105"/>
    </ligand>
</feature>
<feature type="binding site" evidence="1">
    <location>
        <position position="156"/>
    </location>
    <ligand>
        <name>substrate</name>
    </ligand>
</feature>
<feature type="binding site" evidence="1">
    <location>
        <position position="162"/>
    </location>
    <ligand>
        <name>Zn(2+)</name>
        <dbReference type="ChEBI" id="CHEBI:29105"/>
    </ligand>
</feature>
<feature type="binding site" evidence="1">
    <location>
        <position position="164"/>
    </location>
    <ligand>
        <name>Zn(2+)</name>
        <dbReference type="ChEBI" id="CHEBI:29105"/>
    </ligand>
</feature>
<feature type="binding site" evidence="1">
    <location>
        <position position="167"/>
    </location>
    <ligand>
        <name>Zn(2+)</name>
        <dbReference type="ChEBI" id="CHEBI:29105"/>
    </ligand>
</feature>
<feature type="binding site" evidence="1">
    <location>
        <position position="326"/>
    </location>
    <ligand>
        <name>substrate</name>
    </ligand>
</feature>
<feature type="binding site" evidence="1">
    <location>
        <begin position="366"/>
        <end position="369"/>
    </location>
    <ligand>
        <name>substrate</name>
    </ligand>
</feature>